<feature type="chain" id="PRO_0000398236" description="Lipoyl synthase, mitochondrial">
    <location>
        <begin position="1"/>
        <end position="379"/>
    </location>
</feature>
<feature type="domain" description="Radical SAM core" evidence="2">
    <location>
        <begin position="109"/>
        <end position="331"/>
    </location>
</feature>
<feature type="binding site" evidence="1">
    <location>
        <position position="94"/>
    </location>
    <ligand>
        <name>[4Fe-4S] cluster</name>
        <dbReference type="ChEBI" id="CHEBI:49883"/>
        <label>1</label>
    </ligand>
</feature>
<feature type="binding site" evidence="1">
    <location>
        <position position="99"/>
    </location>
    <ligand>
        <name>[4Fe-4S] cluster</name>
        <dbReference type="ChEBI" id="CHEBI:49883"/>
        <label>1</label>
    </ligand>
</feature>
<feature type="binding site" evidence="1">
    <location>
        <position position="105"/>
    </location>
    <ligand>
        <name>[4Fe-4S] cluster</name>
        <dbReference type="ChEBI" id="CHEBI:49883"/>
        <label>1</label>
    </ligand>
</feature>
<feature type="binding site" evidence="1">
    <location>
        <position position="126"/>
    </location>
    <ligand>
        <name>[4Fe-4S] cluster</name>
        <dbReference type="ChEBI" id="CHEBI:49883"/>
        <label>2</label>
        <note>4Fe-4S-S-AdoMet</note>
    </ligand>
</feature>
<feature type="binding site" evidence="1">
    <location>
        <position position="130"/>
    </location>
    <ligand>
        <name>[4Fe-4S] cluster</name>
        <dbReference type="ChEBI" id="CHEBI:49883"/>
        <label>2</label>
        <note>4Fe-4S-S-AdoMet</note>
    </ligand>
</feature>
<feature type="binding site" evidence="1">
    <location>
        <position position="133"/>
    </location>
    <ligand>
        <name>[4Fe-4S] cluster</name>
        <dbReference type="ChEBI" id="CHEBI:49883"/>
        <label>2</label>
        <note>4Fe-4S-S-AdoMet</note>
    </ligand>
</feature>
<feature type="binding site" evidence="1">
    <location>
        <position position="342"/>
    </location>
    <ligand>
        <name>[4Fe-4S] cluster</name>
        <dbReference type="ChEBI" id="CHEBI:49883"/>
        <label>1</label>
    </ligand>
</feature>
<name>LIPA_LEIBR</name>
<organism>
    <name type="scientific">Leishmania braziliensis</name>
    <dbReference type="NCBI Taxonomy" id="5660"/>
    <lineage>
        <taxon>Eukaryota</taxon>
        <taxon>Discoba</taxon>
        <taxon>Euglenozoa</taxon>
        <taxon>Kinetoplastea</taxon>
        <taxon>Metakinetoplastina</taxon>
        <taxon>Trypanosomatida</taxon>
        <taxon>Trypanosomatidae</taxon>
        <taxon>Leishmaniinae</taxon>
        <taxon>Leishmania</taxon>
        <taxon>Leishmania braziliensis species complex</taxon>
    </lineage>
</organism>
<proteinExistence type="inferred from homology"/>
<comment type="function">
    <text evidence="1">Catalyzes the radical-mediated insertion of two sulfur atoms into the C-6 and C-8 positions of the octanoyl moiety bound to the lipoyl domains of lipoate-dependent enzymes, thereby converting the octanoylated domains into lipoylated derivatives.</text>
</comment>
<comment type="catalytic activity">
    <reaction evidence="1">
        <text>[[Fe-S] cluster scaffold protein carrying a second [4Fe-4S](2+) cluster] + N(6)-octanoyl-L-lysyl-[protein] + 2 oxidized [2Fe-2S]-[ferredoxin] + 2 S-adenosyl-L-methionine + 4 H(+) = [[Fe-S] cluster scaffold protein] + N(6)-[(R)-dihydrolipoyl]-L-lysyl-[protein] + 4 Fe(3+) + 2 hydrogen sulfide + 2 5'-deoxyadenosine + 2 L-methionine + 2 reduced [2Fe-2S]-[ferredoxin]</text>
        <dbReference type="Rhea" id="RHEA:16585"/>
        <dbReference type="Rhea" id="RHEA-COMP:9928"/>
        <dbReference type="Rhea" id="RHEA-COMP:10000"/>
        <dbReference type="Rhea" id="RHEA-COMP:10001"/>
        <dbReference type="Rhea" id="RHEA-COMP:10475"/>
        <dbReference type="Rhea" id="RHEA-COMP:14568"/>
        <dbReference type="Rhea" id="RHEA-COMP:14569"/>
        <dbReference type="ChEBI" id="CHEBI:15378"/>
        <dbReference type="ChEBI" id="CHEBI:17319"/>
        <dbReference type="ChEBI" id="CHEBI:29034"/>
        <dbReference type="ChEBI" id="CHEBI:29919"/>
        <dbReference type="ChEBI" id="CHEBI:33722"/>
        <dbReference type="ChEBI" id="CHEBI:33737"/>
        <dbReference type="ChEBI" id="CHEBI:33738"/>
        <dbReference type="ChEBI" id="CHEBI:57844"/>
        <dbReference type="ChEBI" id="CHEBI:59789"/>
        <dbReference type="ChEBI" id="CHEBI:78809"/>
        <dbReference type="ChEBI" id="CHEBI:83100"/>
        <dbReference type="EC" id="2.8.1.8"/>
    </reaction>
</comment>
<comment type="cofactor">
    <cofactor evidence="1">
        <name>[4Fe-4S] cluster</name>
        <dbReference type="ChEBI" id="CHEBI:49883"/>
    </cofactor>
    <text evidence="1">Binds 2 [4Fe-4S] clusters per subunit. One cluster is coordinated with 3 cysteines and an exchangeable S-adenosyl-L-methionine.</text>
</comment>
<comment type="pathway">
    <text evidence="1">Protein modification; protein lipoylation via endogenous pathway; protein N(6)-(lipoyl)lysine from octanoyl-[acyl-carrier-protein]: step 2/2.</text>
</comment>
<comment type="subcellular location">
    <subcellularLocation>
        <location evidence="1">Mitochondrion</location>
    </subcellularLocation>
</comment>
<comment type="miscellaneous">
    <text evidence="1">This protein may be expected to contain an N-terminal transit peptide but none has been predicted.</text>
</comment>
<comment type="similarity">
    <text evidence="1">Belongs to the radical SAM superfamily. Lipoyl synthase family.</text>
</comment>
<sequence>MTDVDKKDPQYKQIFLERFRKKLQSDKTGMSDLESFVELPEGITPVAASIGPIKRGSEPLPPWLKLNVPKGMTHRPRFNRIRRSMREKKLSTVCEEAKCPNIGECWGGGEDNGAATATIMVMGSHCTRGCRFCSVLTSRRPPPLDPDEPEKVAAAVHEMGVDYIVMTMVDRDDLPDGGASHVSRCIRTIKEQNPELMLEALVGDFHGDLKVVEQLAATPLSVYAHNIECVERITPRVRDHRATYKQSLQTLEHVTKWTNGKMLTKSSIMLGLGEEEEEVRQTLRDLRTAGVSAVTLGQYLQPSRTRLKVSRYAHPKEFEMWEKEAMSMGFLYCASGPMVRSSYRAGEYYIKNIVKQRENAKGATTMEAVTAADAVAAGA</sequence>
<dbReference type="EC" id="2.8.1.8" evidence="1"/>
<dbReference type="EMBL" id="FR798993">
    <property type="protein sequence ID" value="CAM38219.1"/>
    <property type="molecule type" value="Genomic_DNA"/>
</dbReference>
<dbReference type="RefSeq" id="XP_001564163.2">
    <property type="nucleotide sequence ID" value="XM_001564113.2"/>
</dbReference>
<dbReference type="SMR" id="A4H9Z3"/>
<dbReference type="FunCoup" id="A4H9Z3">
    <property type="interactions" value="202"/>
</dbReference>
<dbReference type="STRING" id="5660.A4H9Z3"/>
<dbReference type="GeneID" id="5414704"/>
<dbReference type="KEGG" id="lbz:LBRM_19_0670"/>
<dbReference type="VEuPathDB" id="TriTrypDB:LbrM.19.0670"/>
<dbReference type="InParanoid" id="A4H9Z3"/>
<dbReference type="OMA" id="PYCDIDF"/>
<dbReference type="UniPathway" id="UPA00538">
    <property type="reaction ID" value="UER00593"/>
</dbReference>
<dbReference type="Proteomes" id="UP000007258">
    <property type="component" value="Chromosome 19"/>
</dbReference>
<dbReference type="GO" id="GO:0005739">
    <property type="term" value="C:mitochondrion"/>
    <property type="evidence" value="ECO:0007669"/>
    <property type="project" value="UniProtKB-SubCell"/>
</dbReference>
<dbReference type="GO" id="GO:0051539">
    <property type="term" value="F:4 iron, 4 sulfur cluster binding"/>
    <property type="evidence" value="ECO:0007669"/>
    <property type="project" value="UniProtKB-UniRule"/>
</dbReference>
<dbReference type="GO" id="GO:0016992">
    <property type="term" value="F:lipoate synthase activity"/>
    <property type="evidence" value="ECO:0007669"/>
    <property type="project" value="UniProtKB-UniRule"/>
</dbReference>
<dbReference type="GO" id="GO:0046872">
    <property type="term" value="F:metal ion binding"/>
    <property type="evidence" value="ECO:0007669"/>
    <property type="project" value="UniProtKB-KW"/>
</dbReference>
<dbReference type="FunFam" id="3.20.20.70:FF:000306">
    <property type="entry name" value="Lipoyl synthase, mitochondrial"/>
    <property type="match status" value="1"/>
</dbReference>
<dbReference type="Gene3D" id="3.20.20.70">
    <property type="entry name" value="Aldolase class I"/>
    <property type="match status" value="1"/>
</dbReference>
<dbReference type="HAMAP" id="MF_00206">
    <property type="entry name" value="Lipoyl_synth"/>
    <property type="match status" value="1"/>
</dbReference>
<dbReference type="InterPro" id="IPR013785">
    <property type="entry name" value="Aldolase_TIM"/>
</dbReference>
<dbReference type="InterPro" id="IPR006638">
    <property type="entry name" value="Elp3/MiaA/NifB-like_rSAM"/>
</dbReference>
<dbReference type="InterPro" id="IPR031691">
    <property type="entry name" value="LIAS_N"/>
</dbReference>
<dbReference type="InterPro" id="IPR003698">
    <property type="entry name" value="Lipoyl_synth"/>
</dbReference>
<dbReference type="InterPro" id="IPR007197">
    <property type="entry name" value="rSAM"/>
</dbReference>
<dbReference type="NCBIfam" id="TIGR00510">
    <property type="entry name" value="lipA"/>
    <property type="match status" value="1"/>
</dbReference>
<dbReference type="NCBIfam" id="NF004019">
    <property type="entry name" value="PRK05481.1"/>
    <property type="match status" value="1"/>
</dbReference>
<dbReference type="NCBIfam" id="NF009544">
    <property type="entry name" value="PRK12928.1"/>
    <property type="match status" value="1"/>
</dbReference>
<dbReference type="PANTHER" id="PTHR10949">
    <property type="entry name" value="LIPOYL SYNTHASE"/>
    <property type="match status" value="1"/>
</dbReference>
<dbReference type="PANTHER" id="PTHR10949:SF0">
    <property type="entry name" value="LIPOYL SYNTHASE, MITOCHONDRIAL"/>
    <property type="match status" value="1"/>
</dbReference>
<dbReference type="Pfam" id="PF16881">
    <property type="entry name" value="LIAS_N"/>
    <property type="match status" value="1"/>
</dbReference>
<dbReference type="Pfam" id="PF04055">
    <property type="entry name" value="Radical_SAM"/>
    <property type="match status" value="1"/>
</dbReference>
<dbReference type="PIRSF" id="PIRSF005963">
    <property type="entry name" value="Lipoyl_synth"/>
    <property type="match status" value="1"/>
</dbReference>
<dbReference type="SFLD" id="SFLDF00271">
    <property type="entry name" value="lipoyl_synthase"/>
    <property type="match status" value="1"/>
</dbReference>
<dbReference type="SFLD" id="SFLDS00029">
    <property type="entry name" value="Radical_SAM"/>
    <property type="match status" value="1"/>
</dbReference>
<dbReference type="SMART" id="SM00729">
    <property type="entry name" value="Elp3"/>
    <property type="match status" value="1"/>
</dbReference>
<dbReference type="SUPFAM" id="SSF102114">
    <property type="entry name" value="Radical SAM enzymes"/>
    <property type="match status" value="1"/>
</dbReference>
<dbReference type="PROSITE" id="PS51918">
    <property type="entry name" value="RADICAL_SAM"/>
    <property type="match status" value="1"/>
</dbReference>
<keyword id="KW-0004">4Fe-4S</keyword>
<keyword id="KW-0408">Iron</keyword>
<keyword id="KW-0411">Iron-sulfur</keyword>
<keyword id="KW-0479">Metal-binding</keyword>
<keyword id="KW-0496">Mitochondrion</keyword>
<keyword id="KW-1185">Reference proteome</keyword>
<keyword id="KW-0949">S-adenosyl-L-methionine</keyword>
<keyword id="KW-0808">Transferase</keyword>
<protein>
    <recommendedName>
        <fullName evidence="1">Lipoyl synthase, mitochondrial</fullName>
        <ecNumber evidence="1">2.8.1.8</ecNumber>
    </recommendedName>
    <alternativeName>
        <fullName evidence="1">Lipoate synthase</fullName>
        <shortName evidence="1">LS</shortName>
        <shortName evidence="1">Lip-syn</shortName>
    </alternativeName>
    <alternativeName>
        <fullName evidence="1">Lipoic acid synthase</fullName>
    </alternativeName>
</protein>
<evidence type="ECO:0000255" key="1">
    <source>
        <dbReference type="HAMAP-Rule" id="MF_03123"/>
    </source>
</evidence>
<evidence type="ECO:0000255" key="2">
    <source>
        <dbReference type="PROSITE-ProRule" id="PRU01266"/>
    </source>
</evidence>
<gene>
    <name type="ORF">LbrM19_V2.0670</name>
    <name type="ORF">LbrM_19_0670</name>
</gene>
<accession>A4H9Z3</accession>
<reference key="1">
    <citation type="journal article" date="2007" name="Nat. Genet.">
        <title>Comparative genomic analysis of three Leishmania species that cause diverse human disease.</title>
        <authorList>
            <person name="Peacock C.S."/>
            <person name="Seeger K."/>
            <person name="Harris D."/>
            <person name="Murphy L."/>
            <person name="Ruiz J.C."/>
            <person name="Quail M.A."/>
            <person name="Peters N."/>
            <person name="Adlem E."/>
            <person name="Tivey A."/>
            <person name="Aslett M."/>
            <person name="Kerhornou A."/>
            <person name="Ivens A."/>
            <person name="Fraser A."/>
            <person name="Rajandream M.-A."/>
            <person name="Carver T."/>
            <person name="Norbertczak H."/>
            <person name="Chillingworth T."/>
            <person name="Hance Z."/>
            <person name="Jagels K."/>
            <person name="Moule S."/>
            <person name="Ormond D."/>
            <person name="Rutter S."/>
            <person name="Sqaures R."/>
            <person name="Whitehead S."/>
            <person name="Rabbinowitsch E."/>
            <person name="Arrowsmith C."/>
            <person name="White B."/>
            <person name="Thurston S."/>
            <person name="Bringaud F."/>
            <person name="Baldauf S.L."/>
            <person name="Faulconbridge A."/>
            <person name="Jeffares D."/>
            <person name="Depledge D.P."/>
            <person name="Oyola S.O."/>
            <person name="Hilley J.D."/>
            <person name="Brito L.O."/>
            <person name="Tosi L.R.O."/>
            <person name="Barrell B."/>
            <person name="Cruz A.K."/>
            <person name="Mottram J.C."/>
            <person name="Smith D.F."/>
            <person name="Berriman M."/>
        </authorList>
    </citation>
    <scope>NUCLEOTIDE SEQUENCE [LARGE SCALE GENOMIC DNA]</scope>
    <source>
        <strain>MHOM/BR/75/M2904</strain>
    </source>
</reference>